<sequence length="87" mass="9135">MANIKSQIKRIGTNKKAQERNKAVKSELKTAIRSVKTAITAGDKDAAVKAVSLAGKKLDKAASKGVIHKNQAANRKGAIAKQVAKIG</sequence>
<evidence type="ECO:0000255" key="1">
    <source>
        <dbReference type="HAMAP-Rule" id="MF_00500"/>
    </source>
</evidence>
<evidence type="ECO:0000256" key="2">
    <source>
        <dbReference type="SAM" id="MobiDB-lite"/>
    </source>
</evidence>
<evidence type="ECO:0000305" key="3"/>
<accession>A5CR93</accession>
<comment type="function">
    <text evidence="1">Binds directly to 16S ribosomal RNA.</text>
</comment>
<comment type="similarity">
    <text evidence="1">Belongs to the bacterial ribosomal protein bS20 family.</text>
</comment>
<organism>
    <name type="scientific">Clavibacter michiganensis subsp. michiganensis (strain NCPPB 382)</name>
    <dbReference type="NCBI Taxonomy" id="443906"/>
    <lineage>
        <taxon>Bacteria</taxon>
        <taxon>Bacillati</taxon>
        <taxon>Actinomycetota</taxon>
        <taxon>Actinomycetes</taxon>
        <taxon>Micrococcales</taxon>
        <taxon>Microbacteriaceae</taxon>
        <taxon>Clavibacter</taxon>
    </lineage>
</organism>
<gene>
    <name evidence="1" type="primary">rpsT</name>
    <name type="ordered locus">CMM_1551</name>
</gene>
<name>RS20_CLAM3</name>
<proteinExistence type="inferred from homology"/>
<feature type="chain" id="PRO_1000014571" description="Small ribosomal subunit protein bS20">
    <location>
        <begin position="1"/>
        <end position="87"/>
    </location>
</feature>
<feature type="region of interest" description="Disordered" evidence="2">
    <location>
        <begin position="1"/>
        <end position="22"/>
    </location>
</feature>
<protein>
    <recommendedName>
        <fullName evidence="1">Small ribosomal subunit protein bS20</fullName>
    </recommendedName>
    <alternativeName>
        <fullName evidence="3">30S ribosomal protein S20</fullName>
    </alternativeName>
</protein>
<reference key="1">
    <citation type="journal article" date="2008" name="J. Bacteriol.">
        <title>The genome sequence of the tomato-pathogenic actinomycete Clavibacter michiganensis subsp. michiganensis NCPPB382 reveals a large island involved in pathogenicity.</title>
        <authorList>
            <person name="Gartemann K.-H."/>
            <person name="Abt B."/>
            <person name="Bekel T."/>
            <person name="Burger A."/>
            <person name="Engemann J."/>
            <person name="Fluegel M."/>
            <person name="Gaigalat L."/>
            <person name="Goesmann A."/>
            <person name="Graefen I."/>
            <person name="Kalinowski J."/>
            <person name="Kaup O."/>
            <person name="Kirchner O."/>
            <person name="Krause L."/>
            <person name="Linke B."/>
            <person name="McHardy A."/>
            <person name="Meyer F."/>
            <person name="Pohle S."/>
            <person name="Rueckert C."/>
            <person name="Schneiker S."/>
            <person name="Zellermann E.-M."/>
            <person name="Puehler A."/>
            <person name="Eichenlaub R."/>
            <person name="Kaiser O."/>
            <person name="Bartels D."/>
        </authorList>
    </citation>
    <scope>NUCLEOTIDE SEQUENCE [LARGE SCALE GENOMIC DNA]</scope>
    <source>
        <strain>NCPPB 382</strain>
    </source>
</reference>
<keyword id="KW-0687">Ribonucleoprotein</keyword>
<keyword id="KW-0689">Ribosomal protein</keyword>
<keyword id="KW-0694">RNA-binding</keyword>
<keyword id="KW-0699">rRNA-binding</keyword>
<dbReference type="EMBL" id="AM711867">
    <property type="protein sequence ID" value="CAN01598.1"/>
    <property type="molecule type" value="Genomic_DNA"/>
</dbReference>
<dbReference type="RefSeq" id="WP_012038238.1">
    <property type="nucleotide sequence ID" value="NC_009480.1"/>
</dbReference>
<dbReference type="SMR" id="A5CR93"/>
<dbReference type="GeneID" id="92983313"/>
<dbReference type="KEGG" id="cmi:CMM_1551"/>
<dbReference type="eggNOG" id="COG0268">
    <property type="taxonomic scope" value="Bacteria"/>
</dbReference>
<dbReference type="HOGENOM" id="CLU_160655_0_1_11"/>
<dbReference type="OrthoDB" id="9807974at2"/>
<dbReference type="Proteomes" id="UP000001564">
    <property type="component" value="Chromosome"/>
</dbReference>
<dbReference type="GO" id="GO:0005829">
    <property type="term" value="C:cytosol"/>
    <property type="evidence" value="ECO:0007669"/>
    <property type="project" value="TreeGrafter"/>
</dbReference>
<dbReference type="GO" id="GO:0015935">
    <property type="term" value="C:small ribosomal subunit"/>
    <property type="evidence" value="ECO:0007669"/>
    <property type="project" value="TreeGrafter"/>
</dbReference>
<dbReference type="GO" id="GO:0070181">
    <property type="term" value="F:small ribosomal subunit rRNA binding"/>
    <property type="evidence" value="ECO:0007669"/>
    <property type="project" value="TreeGrafter"/>
</dbReference>
<dbReference type="GO" id="GO:0003735">
    <property type="term" value="F:structural constituent of ribosome"/>
    <property type="evidence" value="ECO:0007669"/>
    <property type="project" value="InterPro"/>
</dbReference>
<dbReference type="GO" id="GO:0006412">
    <property type="term" value="P:translation"/>
    <property type="evidence" value="ECO:0007669"/>
    <property type="project" value="UniProtKB-UniRule"/>
</dbReference>
<dbReference type="FunFam" id="1.20.58.110:FF:000001">
    <property type="entry name" value="30S ribosomal protein S20"/>
    <property type="match status" value="1"/>
</dbReference>
<dbReference type="Gene3D" id="1.20.58.110">
    <property type="entry name" value="Ribosomal protein S20"/>
    <property type="match status" value="1"/>
</dbReference>
<dbReference type="HAMAP" id="MF_00500">
    <property type="entry name" value="Ribosomal_bS20"/>
    <property type="match status" value="1"/>
</dbReference>
<dbReference type="InterPro" id="IPR002583">
    <property type="entry name" value="Ribosomal_bS20"/>
</dbReference>
<dbReference type="InterPro" id="IPR036510">
    <property type="entry name" value="Ribosomal_bS20_sf"/>
</dbReference>
<dbReference type="NCBIfam" id="TIGR00029">
    <property type="entry name" value="S20"/>
    <property type="match status" value="1"/>
</dbReference>
<dbReference type="PANTHER" id="PTHR33398">
    <property type="entry name" value="30S RIBOSOMAL PROTEIN S20"/>
    <property type="match status" value="1"/>
</dbReference>
<dbReference type="PANTHER" id="PTHR33398:SF1">
    <property type="entry name" value="SMALL RIBOSOMAL SUBUNIT PROTEIN BS20C"/>
    <property type="match status" value="1"/>
</dbReference>
<dbReference type="Pfam" id="PF01649">
    <property type="entry name" value="Ribosomal_S20p"/>
    <property type="match status" value="1"/>
</dbReference>
<dbReference type="SUPFAM" id="SSF46992">
    <property type="entry name" value="Ribosomal protein S20"/>
    <property type="match status" value="1"/>
</dbReference>